<feature type="chain" id="PRO_1000095288" description="Aspartyl/glutamyl-tRNA(Asn/Gln) amidotransferase subunit C">
    <location>
        <begin position="1"/>
        <end position="96"/>
    </location>
</feature>
<organism>
    <name type="scientific">Herpetosiphon aurantiacus (strain ATCC 23779 / DSM 785 / 114-95)</name>
    <dbReference type="NCBI Taxonomy" id="316274"/>
    <lineage>
        <taxon>Bacteria</taxon>
        <taxon>Bacillati</taxon>
        <taxon>Chloroflexota</taxon>
        <taxon>Chloroflexia</taxon>
        <taxon>Herpetosiphonales</taxon>
        <taxon>Herpetosiphonaceae</taxon>
        <taxon>Herpetosiphon</taxon>
    </lineage>
</organism>
<comment type="function">
    <text evidence="1">Allows the formation of correctly charged Asn-tRNA(Asn) or Gln-tRNA(Gln) through the transamidation of misacylated Asp-tRNA(Asn) or Glu-tRNA(Gln) in organisms which lack either or both of asparaginyl-tRNA or glutaminyl-tRNA synthetases. The reaction takes place in the presence of glutamine and ATP through an activated phospho-Asp-tRNA(Asn) or phospho-Glu-tRNA(Gln).</text>
</comment>
<comment type="catalytic activity">
    <reaction evidence="1">
        <text>L-glutamyl-tRNA(Gln) + L-glutamine + ATP + H2O = L-glutaminyl-tRNA(Gln) + L-glutamate + ADP + phosphate + H(+)</text>
        <dbReference type="Rhea" id="RHEA:17521"/>
        <dbReference type="Rhea" id="RHEA-COMP:9681"/>
        <dbReference type="Rhea" id="RHEA-COMP:9684"/>
        <dbReference type="ChEBI" id="CHEBI:15377"/>
        <dbReference type="ChEBI" id="CHEBI:15378"/>
        <dbReference type="ChEBI" id="CHEBI:29985"/>
        <dbReference type="ChEBI" id="CHEBI:30616"/>
        <dbReference type="ChEBI" id="CHEBI:43474"/>
        <dbReference type="ChEBI" id="CHEBI:58359"/>
        <dbReference type="ChEBI" id="CHEBI:78520"/>
        <dbReference type="ChEBI" id="CHEBI:78521"/>
        <dbReference type="ChEBI" id="CHEBI:456216"/>
    </reaction>
</comment>
<comment type="catalytic activity">
    <reaction evidence="1">
        <text>L-aspartyl-tRNA(Asn) + L-glutamine + ATP + H2O = L-asparaginyl-tRNA(Asn) + L-glutamate + ADP + phosphate + 2 H(+)</text>
        <dbReference type="Rhea" id="RHEA:14513"/>
        <dbReference type="Rhea" id="RHEA-COMP:9674"/>
        <dbReference type="Rhea" id="RHEA-COMP:9677"/>
        <dbReference type="ChEBI" id="CHEBI:15377"/>
        <dbReference type="ChEBI" id="CHEBI:15378"/>
        <dbReference type="ChEBI" id="CHEBI:29985"/>
        <dbReference type="ChEBI" id="CHEBI:30616"/>
        <dbReference type="ChEBI" id="CHEBI:43474"/>
        <dbReference type="ChEBI" id="CHEBI:58359"/>
        <dbReference type="ChEBI" id="CHEBI:78515"/>
        <dbReference type="ChEBI" id="CHEBI:78516"/>
        <dbReference type="ChEBI" id="CHEBI:456216"/>
    </reaction>
</comment>
<comment type="subunit">
    <text evidence="1">Heterotrimer of A, B and C subunits.</text>
</comment>
<comment type="similarity">
    <text evidence="1">Belongs to the GatC family.</text>
</comment>
<proteinExistence type="inferred from homology"/>
<sequence>MSLTPEQVRQVAHLARLKLDEDEMERMRLQLSSILDHIEMLQAIDVTDVPITAQVTDLTNVTRIDAVTSSLPVDAALANAPDRQGDYFRVKAVFEE</sequence>
<accession>A9B090</accession>
<protein>
    <recommendedName>
        <fullName evidence="1">Aspartyl/glutamyl-tRNA(Asn/Gln) amidotransferase subunit C</fullName>
        <shortName evidence="1">Asp/Glu-ADT subunit C</shortName>
        <ecNumber evidence="1">6.3.5.-</ecNumber>
    </recommendedName>
</protein>
<gene>
    <name evidence="1" type="primary">gatC</name>
    <name type="ordered locus">Haur_2561</name>
</gene>
<dbReference type="EC" id="6.3.5.-" evidence="1"/>
<dbReference type="EMBL" id="CP000875">
    <property type="protein sequence ID" value="ABX05199.1"/>
    <property type="molecule type" value="Genomic_DNA"/>
</dbReference>
<dbReference type="SMR" id="A9B090"/>
<dbReference type="FunCoup" id="A9B090">
    <property type="interactions" value="464"/>
</dbReference>
<dbReference type="STRING" id="316274.Haur_2561"/>
<dbReference type="KEGG" id="hau:Haur_2561"/>
<dbReference type="eggNOG" id="COG0721">
    <property type="taxonomic scope" value="Bacteria"/>
</dbReference>
<dbReference type="HOGENOM" id="CLU_105899_1_0_0"/>
<dbReference type="InParanoid" id="A9B090"/>
<dbReference type="Proteomes" id="UP000000787">
    <property type="component" value="Chromosome"/>
</dbReference>
<dbReference type="GO" id="GO:0050566">
    <property type="term" value="F:asparaginyl-tRNA synthase (glutamine-hydrolyzing) activity"/>
    <property type="evidence" value="ECO:0007669"/>
    <property type="project" value="RHEA"/>
</dbReference>
<dbReference type="GO" id="GO:0005524">
    <property type="term" value="F:ATP binding"/>
    <property type="evidence" value="ECO:0007669"/>
    <property type="project" value="UniProtKB-KW"/>
</dbReference>
<dbReference type="GO" id="GO:0050567">
    <property type="term" value="F:glutaminyl-tRNA synthase (glutamine-hydrolyzing) activity"/>
    <property type="evidence" value="ECO:0007669"/>
    <property type="project" value="UniProtKB-UniRule"/>
</dbReference>
<dbReference type="GO" id="GO:0070681">
    <property type="term" value="P:glutaminyl-tRNAGln biosynthesis via transamidation"/>
    <property type="evidence" value="ECO:0007669"/>
    <property type="project" value="TreeGrafter"/>
</dbReference>
<dbReference type="GO" id="GO:0006450">
    <property type="term" value="P:regulation of translational fidelity"/>
    <property type="evidence" value="ECO:0007669"/>
    <property type="project" value="InterPro"/>
</dbReference>
<dbReference type="GO" id="GO:0006412">
    <property type="term" value="P:translation"/>
    <property type="evidence" value="ECO:0007669"/>
    <property type="project" value="UniProtKB-UniRule"/>
</dbReference>
<dbReference type="Gene3D" id="1.10.20.60">
    <property type="entry name" value="Glu-tRNAGln amidotransferase C subunit, N-terminal domain"/>
    <property type="match status" value="1"/>
</dbReference>
<dbReference type="HAMAP" id="MF_00122">
    <property type="entry name" value="GatC"/>
    <property type="match status" value="1"/>
</dbReference>
<dbReference type="InterPro" id="IPR036113">
    <property type="entry name" value="Asp/Glu-ADT_sf_sub_c"/>
</dbReference>
<dbReference type="InterPro" id="IPR003837">
    <property type="entry name" value="GatC"/>
</dbReference>
<dbReference type="NCBIfam" id="TIGR00135">
    <property type="entry name" value="gatC"/>
    <property type="match status" value="1"/>
</dbReference>
<dbReference type="PANTHER" id="PTHR15004">
    <property type="entry name" value="GLUTAMYL-TRNA(GLN) AMIDOTRANSFERASE SUBUNIT C, MITOCHONDRIAL"/>
    <property type="match status" value="1"/>
</dbReference>
<dbReference type="PANTHER" id="PTHR15004:SF0">
    <property type="entry name" value="GLUTAMYL-TRNA(GLN) AMIDOTRANSFERASE SUBUNIT C, MITOCHONDRIAL"/>
    <property type="match status" value="1"/>
</dbReference>
<dbReference type="Pfam" id="PF02686">
    <property type="entry name" value="GatC"/>
    <property type="match status" value="1"/>
</dbReference>
<dbReference type="SUPFAM" id="SSF141000">
    <property type="entry name" value="Glu-tRNAGln amidotransferase C subunit"/>
    <property type="match status" value="1"/>
</dbReference>
<evidence type="ECO:0000255" key="1">
    <source>
        <dbReference type="HAMAP-Rule" id="MF_00122"/>
    </source>
</evidence>
<reference key="1">
    <citation type="journal article" date="2011" name="Stand. Genomic Sci.">
        <title>Complete genome sequence of the filamentous gliding predatory bacterium Herpetosiphon aurantiacus type strain (114-95(T)).</title>
        <authorList>
            <person name="Kiss H."/>
            <person name="Nett M."/>
            <person name="Domin N."/>
            <person name="Martin K."/>
            <person name="Maresca J.A."/>
            <person name="Copeland A."/>
            <person name="Lapidus A."/>
            <person name="Lucas S."/>
            <person name="Berry K.W."/>
            <person name="Glavina Del Rio T."/>
            <person name="Dalin E."/>
            <person name="Tice H."/>
            <person name="Pitluck S."/>
            <person name="Richardson P."/>
            <person name="Bruce D."/>
            <person name="Goodwin L."/>
            <person name="Han C."/>
            <person name="Detter J.C."/>
            <person name="Schmutz J."/>
            <person name="Brettin T."/>
            <person name="Land M."/>
            <person name="Hauser L."/>
            <person name="Kyrpides N.C."/>
            <person name="Ivanova N."/>
            <person name="Goeker M."/>
            <person name="Woyke T."/>
            <person name="Klenk H.P."/>
            <person name="Bryant D.A."/>
        </authorList>
    </citation>
    <scope>NUCLEOTIDE SEQUENCE [LARGE SCALE GENOMIC DNA]</scope>
    <source>
        <strain>ATCC 23779 / DSM 785 / 114-95</strain>
    </source>
</reference>
<name>GATC_HERA2</name>
<keyword id="KW-0067">ATP-binding</keyword>
<keyword id="KW-0436">Ligase</keyword>
<keyword id="KW-0547">Nucleotide-binding</keyword>
<keyword id="KW-0648">Protein biosynthesis</keyword>